<reference key="1">
    <citation type="submission" date="2008-10" db="EMBL/GenBank/DDBJ databases">
        <title>Genome sequence of Bacillus cereus AH820.</title>
        <authorList>
            <person name="Dodson R.J."/>
            <person name="Durkin A.S."/>
            <person name="Rosovitz M.J."/>
            <person name="Rasko D.A."/>
            <person name="Hoffmaster A."/>
            <person name="Ravel J."/>
            <person name="Sutton G."/>
        </authorList>
    </citation>
    <scope>NUCLEOTIDE SEQUENCE [LARGE SCALE GENOMIC DNA]</scope>
    <source>
        <strain>AH820</strain>
    </source>
</reference>
<organism>
    <name type="scientific">Bacillus cereus (strain AH820)</name>
    <dbReference type="NCBI Taxonomy" id="405535"/>
    <lineage>
        <taxon>Bacteria</taxon>
        <taxon>Bacillati</taxon>
        <taxon>Bacillota</taxon>
        <taxon>Bacilli</taxon>
        <taxon>Bacillales</taxon>
        <taxon>Bacillaceae</taxon>
        <taxon>Bacillus</taxon>
        <taxon>Bacillus cereus group</taxon>
    </lineage>
</organism>
<keyword id="KW-0963">Cytoplasm</keyword>
<keyword id="KW-0227">DNA damage</keyword>
<keyword id="KW-0233">DNA recombination</keyword>
<keyword id="KW-0234">DNA repair</keyword>
<keyword id="KW-0255">Endonuclease</keyword>
<keyword id="KW-0378">Hydrolase</keyword>
<keyword id="KW-0460">Magnesium</keyword>
<keyword id="KW-0479">Metal-binding</keyword>
<keyword id="KW-0540">Nuclease</keyword>
<proteinExistence type="inferred from homology"/>
<comment type="function">
    <text evidence="1">Endonuclease that resolves Holliday junction intermediates in genetic recombination. Cleaves mobile four-strand junctions by introducing symmetrical nicks in paired strands. Promotes annealing of linear ssDNA with homologous dsDNA. Required for DNA repair, homologous recombination and chromosome segregation.</text>
</comment>
<comment type="catalytic activity">
    <reaction evidence="1">
        <text>Endonucleolytic cleavage at a junction such as a reciprocal single-stranded crossover between two homologous DNA duplexes (Holliday junction).</text>
        <dbReference type="EC" id="3.1.21.10"/>
    </reaction>
</comment>
<comment type="cofactor">
    <cofactor evidence="1">
        <name>Mg(2+)</name>
        <dbReference type="ChEBI" id="CHEBI:18420"/>
    </cofactor>
    <text evidence="1">Binds 1 Mg(2+) ion per subunit.</text>
</comment>
<comment type="subcellular location">
    <subcellularLocation>
        <location evidence="1">Cytoplasm</location>
    </subcellularLocation>
</comment>
<comment type="similarity">
    <text evidence="1">Belongs to the RecU family.</text>
</comment>
<protein>
    <recommendedName>
        <fullName evidence="1">Holliday junction resolvase RecU</fullName>
        <ecNumber evidence="1">3.1.21.10</ecNumber>
    </recommendedName>
    <alternativeName>
        <fullName evidence="1">Recombination protein U homolog</fullName>
    </alternativeName>
</protein>
<accession>B7JHR7</accession>
<sequence length="200" mass="23343">MTIRYPNGKRYNQASQPHKTPIKKHTYSNRGMSLEEELNETNEYYLTHNIACVHKKPTPLQIVKVDYPARSAAVVKEAYFKQPSTTDYNGVYKGKYIDFEAKETKNKTSFPLQNFHLHQIEHMKQVIAHNGIAFVIIKFTLFDELYLLDAKHIITFWNRQNTGGRKSITKEEIVEHGSLLSCGYHPRIDYIRVLDTVYFS</sequence>
<name>RECU_BACC0</name>
<evidence type="ECO:0000255" key="1">
    <source>
        <dbReference type="HAMAP-Rule" id="MF_00130"/>
    </source>
</evidence>
<evidence type="ECO:0000256" key="2">
    <source>
        <dbReference type="SAM" id="MobiDB-lite"/>
    </source>
</evidence>
<gene>
    <name evidence="1" type="primary">recU</name>
    <name type="ordered locus">BCAH820_1644</name>
</gene>
<dbReference type="EC" id="3.1.21.10" evidence="1"/>
<dbReference type="EMBL" id="CP001283">
    <property type="protein sequence ID" value="ACK91061.1"/>
    <property type="molecule type" value="Genomic_DNA"/>
</dbReference>
<dbReference type="RefSeq" id="WP_000155594.1">
    <property type="nucleotide sequence ID" value="NC_011773.1"/>
</dbReference>
<dbReference type="SMR" id="B7JHR7"/>
<dbReference type="GeneID" id="45021545"/>
<dbReference type="KEGG" id="bcu:BCAH820_1644"/>
<dbReference type="HOGENOM" id="CLU_096340_0_0_9"/>
<dbReference type="Proteomes" id="UP000001363">
    <property type="component" value="Chromosome"/>
</dbReference>
<dbReference type="GO" id="GO:0005737">
    <property type="term" value="C:cytoplasm"/>
    <property type="evidence" value="ECO:0007669"/>
    <property type="project" value="UniProtKB-SubCell"/>
</dbReference>
<dbReference type="GO" id="GO:0004519">
    <property type="term" value="F:endonuclease activity"/>
    <property type="evidence" value="ECO:0007669"/>
    <property type="project" value="UniProtKB-UniRule"/>
</dbReference>
<dbReference type="GO" id="GO:0000287">
    <property type="term" value="F:magnesium ion binding"/>
    <property type="evidence" value="ECO:0007669"/>
    <property type="project" value="UniProtKB-UniRule"/>
</dbReference>
<dbReference type="GO" id="GO:0003676">
    <property type="term" value="F:nucleic acid binding"/>
    <property type="evidence" value="ECO:0007669"/>
    <property type="project" value="InterPro"/>
</dbReference>
<dbReference type="GO" id="GO:0007059">
    <property type="term" value="P:chromosome segregation"/>
    <property type="evidence" value="ECO:0007669"/>
    <property type="project" value="UniProtKB-UniRule"/>
</dbReference>
<dbReference type="GO" id="GO:0006310">
    <property type="term" value="P:DNA recombination"/>
    <property type="evidence" value="ECO:0007669"/>
    <property type="project" value="UniProtKB-UniRule"/>
</dbReference>
<dbReference type="GO" id="GO:0006281">
    <property type="term" value="P:DNA repair"/>
    <property type="evidence" value="ECO:0007669"/>
    <property type="project" value="UniProtKB-UniRule"/>
</dbReference>
<dbReference type="CDD" id="cd22354">
    <property type="entry name" value="RecU-like"/>
    <property type="match status" value="1"/>
</dbReference>
<dbReference type="Gene3D" id="3.40.1350.10">
    <property type="match status" value="1"/>
</dbReference>
<dbReference type="HAMAP" id="MF_00130">
    <property type="entry name" value="RecU"/>
    <property type="match status" value="1"/>
</dbReference>
<dbReference type="InterPro" id="IPR004612">
    <property type="entry name" value="Resolv_RecU"/>
</dbReference>
<dbReference type="InterPro" id="IPR011335">
    <property type="entry name" value="Restrct_endonuc-II-like"/>
</dbReference>
<dbReference type="InterPro" id="IPR011856">
    <property type="entry name" value="tRNA_endonuc-like_dom_sf"/>
</dbReference>
<dbReference type="NCBIfam" id="NF002581">
    <property type="entry name" value="PRK02234.1-2"/>
    <property type="match status" value="1"/>
</dbReference>
<dbReference type="NCBIfam" id="NF002584">
    <property type="entry name" value="PRK02234.1-5"/>
    <property type="match status" value="1"/>
</dbReference>
<dbReference type="NCBIfam" id="NF002585">
    <property type="entry name" value="PRK02234.1-6"/>
    <property type="match status" value="1"/>
</dbReference>
<dbReference type="NCBIfam" id="TIGR00648">
    <property type="entry name" value="recU"/>
    <property type="match status" value="1"/>
</dbReference>
<dbReference type="Pfam" id="PF03838">
    <property type="entry name" value="RecU"/>
    <property type="match status" value="1"/>
</dbReference>
<dbReference type="PIRSF" id="PIRSF037785">
    <property type="entry name" value="RecU"/>
    <property type="match status" value="1"/>
</dbReference>
<dbReference type="SUPFAM" id="SSF52980">
    <property type="entry name" value="Restriction endonuclease-like"/>
    <property type="match status" value="1"/>
</dbReference>
<feature type="chain" id="PRO_1000117722" description="Holliday junction resolvase RecU">
    <location>
        <begin position="1"/>
        <end position="200"/>
    </location>
</feature>
<feature type="region of interest" description="Disordered" evidence="2">
    <location>
        <begin position="1"/>
        <end position="25"/>
    </location>
</feature>
<feature type="binding site" evidence="1">
    <location>
        <position position="85"/>
    </location>
    <ligand>
        <name>Mg(2+)</name>
        <dbReference type="ChEBI" id="CHEBI:18420"/>
    </ligand>
</feature>
<feature type="binding site" evidence="1">
    <location>
        <position position="87"/>
    </location>
    <ligand>
        <name>Mg(2+)</name>
        <dbReference type="ChEBI" id="CHEBI:18420"/>
    </ligand>
</feature>
<feature type="binding site" evidence="1">
    <location>
        <position position="100"/>
    </location>
    <ligand>
        <name>Mg(2+)</name>
        <dbReference type="ChEBI" id="CHEBI:18420"/>
    </ligand>
</feature>
<feature type="binding site" evidence="1">
    <location>
        <position position="119"/>
    </location>
    <ligand>
        <name>Mg(2+)</name>
        <dbReference type="ChEBI" id="CHEBI:18420"/>
    </ligand>
</feature>
<feature type="site" description="Transition state stabilizer" evidence="1">
    <location>
        <position position="102"/>
    </location>
</feature>